<protein>
    <recommendedName>
        <fullName>Succinyl-CoA:3-ketoacid coenzyme A transferase subunit B</fullName>
        <ecNumber>2.8.3.5</ecNumber>
    </recommendedName>
    <alternativeName>
        <fullName>OXCT B</fullName>
    </alternativeName>
    <alternativeName>
        <fullName>Succinyl-CoA:3-oxoacid CoA-transferase</fullName>
    </alternativeName>
</protein>
<gene>
    <name type="primary">lpsJ</name>
    <name type="synonym">wxcJ</name>
    <name type="ordered locus">XCC0628</name>
</gene>
<sequence length="213" mass="22344">MAWTRDQMAARAARELTDGAYVNLGIGLPTLVANHIPDGVDVWLQSENGLLGIGPFPGEDEVDADLINAGKQTVTARSGASYFGSHDSFAMIRGGHIDLAILGAMQVTDRGDLANWMVPGKMVKGMGGAMDLVAGVKRVVVLMEHVAKDGTHKILPQCDLPLTGVGVVDRIITDLAVFDVTDGGLVLVEAAEGVGLEELRAKTGVAFVVQTRG</sequence>
<reference key="1">
    <citation type="journal article" date="2002" name="Nature">
        <title>Comparison of the genomes of two Xanthomonas pathogens with differing host specificities.</title>
        <authorList>
            <person name="da Silva A.C.R."/>
            <person name="Ferro J.A."/>
            <person name="Reinach F.C."/>
            <person name="Farah C.S."/>
            <person name="Furlan L.R."/>
            <person name="Quaggio R.B."/>
            <person name="Monteiro-Vitorello C.B."/>
            <person name="Van Sluys M.A."/>
            <person name="Almeida N.F. Jr."/>
            <person name="Alves L.M.C."/>
            <person name="do Amaral A.M."/>
            <person name="Bertolini M.C."/>
            <person name="Camargo L.E.A."/>
            <person name="Camarotte G."/>
            <person name="Cannavan F."/>
            <person name="Cardozo J."/>
            <person name="Chambergo F."/>
            <person name="Ciapina L.P."/>
            <person name="Cicarelli R.M.B."/>
            <person name="Coutinho L.L."/>
            <person name="Cursino-Santos J.R."/>
            <person name="El-Dorry H."/>
            <person name="Faria J.B."/>
            <person name="Ferreira A.J.S."/>
            <person name="Ferreira R.C.C."/>
            <person name="Ferro M.I.T."/>
            <person name="Formighieri E.F."/>
            <person name="Franco M.C."/>
            <person name="Greggio C.C."/>
            <person name="Gruber A."/>
            <person name="Katsuyama A.M."/>
            <person name="Kishi L.T."/>
            <person name="Leite R.P."/>
            <person name="Lemos E.G.M."/>
            <person name="Lemos M.V.F."/>
            <person name="Locali E.C."/>
            <person name="Machado M.A."/>
            <person name="Madeira A.M.B.N."/>
            <person name="Martinez-Rossi N.M."/>
            <person name="Martins E.C."/>
            <person name="Meidanis J."/>
            <person name="Menck C.F.M."/>
            <person name="Miyaki C.Y."/>
            <person name="Moon D.H."/>
            <person name="Moreira L.M."/>
            <person name="Novo M.T.M."/>
            <person name="Okura V.K."/>
            <person name="Oliveira M.C."/>
            <person name="Oliveira V.R."/>
            <person name="Pereira H.A."/>
            <person name="Rossi A."/>
            <person name="Sena J.A.D."/>
            <person name="Silva C."/>
            <person name="de Souza R.F."/>
            <person name="Spinola L.A.F."/>
            <person name="Takita M.A."/>
            <person name="Tamura R.E."/>
            <person name="Teixeira E.C."/>
            <person name="Tezza R.I.D."/>
            <person name="Trindade dos Santos M."/>
            <person name="Truffi D."/>
            <person name="Tsai S.M."/>
            <person name="White F.F."/>
            <person name="Setubal J.C."/>
            <person name="Kitajima J.P."/>
        </authorList>
    </citation>
    <scope>NUCLEOTIDE SEQUENCE [LARGE SCALE GENOMIC DNA]</scope>
    <source>
        <strain>ATCC 33913 / DSM 3586 / NCPPB 528 / LMG 568 / P 25</strain>
    </source>
</reference>
<organism>
    <name type="scientific">Xanthomonas campestris pv. campestris (strain ATCC 33913 / DSM 3586 / NCPPB 528 / LMG 568 / P 25)</name>
    <dbReference type="NCBI Taxonomy" id="190485"/>
    <lineage>
        <taxon>Bacteria</taxon>
        <taxon>Pseudomonadati</taxon>
        <taxon>Pseudomonadota</taxon>
        <taxon>Gammaproteobacteria</taxon>
        <taxon>Lysobacterales</taxon>
        <taxon>Lysobacteraceae</taxon>
        <taxon>Xanthomonas</taxon>
    </lineage>
</organism>
<evidence type="ECO:0000250" key="1"/>
<evidence type="ECO:0000255" key="2">
    <source>
        <dbReference type="PROSITE-ProRule" id="PRU10034"/>
    </source>
</evidence>
<evidence type="ECO:0000305" key="3"/>
<accession>P0C7I8</accession>
<accession>O34263</accession>
<comment type="catalytic activity">
    <reaction evidence="2">
        <text>a 3-oxo acid + succinyl-CoA = a 3-oxoacyl-CoA + succinate</text>
        <dbReference type="Rhea" id="RHEA:24564"/>
        <dbReference type="ChEBI" id="CHEBI:30031"/>
        <dbReference type="ChEBI" id="CHEBI:35973"/>
        <dbReference type="ChEBI" id="CHEBI:57292"/>
        <dbReference type="ChEBI" id="CHEBI:90726"/>
        <dbReference type="EC" id="2.8.3.5"/>
    </reaction>
</comment>
<comment type="pathway">
    <text>Bacterial outer membrane biogenesis; lipopolysaccharide biosynthesis.</text>
</comment>
<comment type="subunit">
    <text evidence="1">Heterodimer of a subunit A and a subunit B.</text>
</comment>
<comment type="similarity">
    <text evidence="3">Belongs to the 3-oxoacid CoA-transferase subunit B family.</text>
</comment>
<keyword id="KW-0448">Lipopolysaccharide biosynthesis</keyword>
<keyword id="KW-1185">Reference proteome</keyword>
<keyword id="KW-0808">Transferase</keyword>
<dbReference type="EC" id="2.8.3.5"/>
<dbReference type="EMBL" id="AE008922">
    <property type="protein sequence ID" value="AAM39944.1"/>
    <property type="molecule type" value="Genomic_DNA"/>
</dbReference>
<dbReference type="RefSeq" id="NP_636020.1">
    <property type="nucleotide sequence ID" value="NC_003902.1"/>
</dbReference>
<dbReference type="RefSeq" id="WP_011035871.1">
    <property type="nucleotide sequence ID" value="NC_003902.1"/>
</dbReference>
<dbReference type="SMR" id="P0C7I8"/>
<dbReference type="STRING" id="190485.XCC0628"/>
<dbReference type="EnsemblBacteria" id="AAM39944">
    <property type="protein sequence ID" value="AAM39944"/>
    <property type="gene ID" value="XCC0628"/>
</dbReference>
<dbReference type="KEGG" id="xcc:XCC0628"/>
<dbReference type="PATRIC" id="fig|190485.4.peg.689"/>
<dbReference type="eggNOG" id="COG2057">
    <property type="taxonomic scope" value="Bacteria"/>
</dbReference>
<dbReference type="HOGENOM" id="CLU_019942_4_1_6"/>
<dbReference type="OrthoDB" id="9778604at2"/>
<dbReference type="UniPathway" id="UPA00030"/>
<dbReference type="Proteomes" id="UP000001010">
    <property type="component" value="Chromosome"/>
</dbReference>
<dbReference type="GO" id="GO:0008410">
    <property type="term" value="F:CoA-transferase activity"/>
    <property type="evidence" value="ECO:0000318"/>
    <property type="project" value="GO_Central"/>
</dbReference>
<dbReference type="GO" id="GO:0008260">
    <property type="term" value="F:succinyl-CoA:3-oxo-acid CoA-transferase activity"/>
    <property type="evidence" value="ECO:0007669"/>
    <property type="project" value="UniProtKB-EC"/>
</dbReference>
<dbReference type="GO" id="GO:0009103">
    <property type="term" value="P:lipopolysaccharide biosynthetic process"/>
    <property type="evidence" value="ECO:0007669"/>
    <property type="project" value="UniProtKB-UniPathway"/>
</dbReference>
<dbReference type="FunFam" id="3.40.1080.10:FF:000001">
    <property type="entry name" value="Succinyl-coa:3-ketoacid-coenzyme a transferase subunit b"/>
    <property type="match status" value="1"/>
</dbReference>
<dbReference type="Gene3D" id="3.40.1080.10">
    <property type="entry name" value="Glutaconate Coenzyme A-transferase"/>
    <property type="match status" value="1"/>
</dbReference>
<dbReference type="InterPro" id="IPR012791">
    <property type="entry name" value="3-oxoacid_CoA-transf_B"/>
</dbReference>
<dbReference type="InterPro" id="IPR004165">
    <property type="entry name" value="CoA_trans_fam_I"/>
</dbReference>
<dbReference type="InterPro" id="IPR004164">
    <property type="entry name" value="CoA_transf_AS"/>
</dbReference>
<dbReference type="InterPro" id="IPR037171">
    <property type="entry name" value="NagB/RpiA_transferase-like"/>
</dbReference>
<dbReference type="NCBIfam" id="TIGR02428">
    <property type="entry name" value="pcaJ_scoB_fam"/>
    <property type="match status" value="1"/>
</dbReference>
<dbReference type="PANTHER" id="PTHR13707">
    <property type="entry name" value="KETOACID-COENZYME A TRANSFERASE"/>
    <property type="match status" value="1"/>
</dbReference>
<dbReference type="PANTHER" id="PTHR13707:SF57">
    <property type="entry name" value="SUCCINYL-COA:3-KETOACID COENZYME A TRANSFERASE SUBUNIT B-RELATED"/>
    <property type="match status" value="1"/>
</dbReference>
<dbReference type="Pfam" id="PF01144">
    <property type="entry name" value="CoA_trans"/>
    <property type="match status" value="1"/>
</dbReference>
<dbReference type="SMART" id="SM00882">
    <property type="entry name" value="CoA_trans"/>
    <property type="match status" value="1"/>
</dbReference>
<dbReference type="SUPFAM" id="SSF100950">
    <property type="entry name" value="NagB/RpiA/CoA transferase-like"/>
    <property type="match status" value="1"/>
</dbReference>
<dbReference type="PROSITE" id="PS01274">
    <property type="entry name" value="COA_TRANSF_2"/>
    <property type="match status" value="1"/>
</dbReference>
<proteinExistence type="inferred from homology"/>
<name>SCOB_XANCP</name>
<feature type="chain" id="PRO_0000157925" description="Succinyl-CoA:3-ketoacid coenzyme A transferase subunit B">
    <location>
        <begin position="1"/>
        <end position="213"/>
    </location>
</feature>
<feature type="active site" evidence="2">
    <location>
        <position position="47"/>
    </location>
</feature>